<reference key="1">
    <citation type="journal article" date="1988" name="EMBO J.">
        <title>The finger motif defines a multigene family represented in the maternal mRNA of Xenopus laevis oocytes.</title>
        <authorList>
            <person name="Koester M."/>
            <person name="Pieler T."/>
            <person name="Poeting A."/>
            <person name="Knoechel W."/>
        </authorList>
    </citation>
    <scope>NUCLEOTIDE SEQUENCE</scope>
</reference>
<feature type="chain" id="PRO_0000047815" description="Oocyte zinc finger protein XlCOF10">
    <location>
        <begin position="1" status="less than"/>
        <end position="214"/>
    </location>
</feature>
<feature type="zinc finger region" description="C2H2-type 1" evidence="1">
    <location>
        <begin position="1"/>
        <end position="23"/>
    </location>
</feature>
<feature type="zinc finger region" description="C2H2-type 2" evidence="1">
    <location>
        <begin position="29"/>
        <end position="51"/>
    </location>
</feature>
<feature type="zinc finger region" description="C2H2-type 3" evidence="1">
    <location>
        <begin position="57"/>
        <end position="79"/>
    </location>
</feature>
<feature type="zinc finger region" description="C2H2-type 4" evidence="1">
    <location>
        <begin position="85"/>
        <end position="107"/>
    </location>
</feature>
<feature type="zinc finger region" description="C2H2-type 5" evidence="1">
    <location>
        <begin position="113"/>
        <end position="135"/>
    </location>
</feature>
<feature type="zinc finger region" description="C2H2-type 6" evidence="1">
    <location>
        <begin position="141"/>
        <end position="163"/>
    </location>
</feature>
<feature type="zinc finger region" description="C2H2-type 7" evidence="1">
    <location>
        <begin position="169"/>
        <end position="191"/>
    </location>
</feature>
<feature type="non-terminal residue">
    <location>
        <position position="1"/>
    </location>
</feature>
<accession>P18739</accession>
<keyword id="KW-0238">DNA-binding</keyword>
<keyword id="KW-0479">Metal-binding</keyword>
<keyword id="KW-0539">Nucleus</keyword>
<keyword id="KW-1185">Reference proteome</keyword>
<keyword id="KW-0677">Repeat</keyword>
<keyword id="KW-0804">Transcription</keyword>
<keyword id="KW-0805">Transcription regulation</keyword>
<keyword id="KW-0862">Zinc</keyword>
<keyword id="KW-0863">Zinc-finger</keyword>
<organism>
    <name type="scientific">Xenopus laevis</name>
    <name type="common">African clawed frog</name>
    <dbReference type="NCBI Taxonomy" id="8355"/>
    <lineage>
        <taxon>Eukaryota</taxon>
        <taxon>Metazoa</taxon>
        <taxon>Chordata</taxon>
        <taxon>Craniata</taxon>
        <taxon>Vertebrata</taxon>
        <taxon>Euteleostomi</taxon>
        <taxon>Amphibia</taxon>
        <taxon>Batrachia</taxon>
        <taxon>Anura</taxon>
        <taxon>Pipoidea</taxon>
        <taxon>Pipidae</taxon>
        <taxon>Xenopodinae</taxon>
        <taxon>Xenopus</taxon>
        <taxon>Xenopus</taxon>
    </lineage>
</organism>
<protein>
    <recommendedName>
        <fullName>Oocyte zinc finger protein XlCOF10</fullName>
    </recommendedName>
</protein>
<evidence type="ECO:0000255" key="1">
    <source>
        <dbReference type="PROSITE-ProRule" id="PRU00042"/>
    </source>
</evidence>
<evidence type="ECO:0000305" key="2"/>
<dbReference type="PIR" id="S00832">
    <property type="entry name" value="S00832"/>
</dbReference>
<dbReference type="SMR" id="P18739"/>
<dbReference type="Proteomes" id="UP000186698">
    <property type="component" value="Unplaced"/>
</dbReference>
<dbReference type="GO" id="GO:0005634">
    <property type="term" value="C:nucleus"/>
    <property type="evidence" value="ECO:0007669"/>
    <property type="project" value="UniProtKB-SubCell"/>
</dbReference>
<dbReference type="GO" id="GO:0000981">
    <property type="term" value="F:DNA-binding transcription factor activity, RNA polymerase II-specific"/>
    <property type="evidence" value="ECO:0000318"/>
    <property type="project" value="GO_Central"/>
</dbReference>
<dbReference type="GO" id="GO:0000978">
    <property type="term" value="F:RNA polymerase II cis-regulatory region sequence-specific DNA binding"/>
    <property type="evidence" value="ECO:0000318"/>
    <property type="project" value="GO_Central"/>
</dbReference>
<dbReference type="GO" id="GO:0008270">
    <property type="term" value="F:zinc ion binding"/>
    <property type="evidence" value="ECO:0007669"/>
    <property type="project" value="UniProtKB-KW"/>
</dbReference>
<dbReference type="GO" id="GO:0006357">
    <property type="term" value="P:regulation of transcription by RNA polymerase II"/>
    <property type="evidence" value="ECO:0000318"/>
    <property type="project" value="GO_Central"/>
</dbReference>
<dbReference type="FunFam" id="3.30.160.60:FF:000100">
    <property type="entry name" value="Zinc finger 45-like"/>
    <property type="match status" value="1"/>
</dbReference>
<dbReference type="FunFam" id="3.30.160.60:FF:000812">
    <property type="entry name" value="zinc finger protein 23 isoform X2"/>
    <property type="match status" value="2"/>
</dbReference>
<dbReference type="FunFam" id="3.30.160.60:FF:002343">
    <property type="entry name" value="Zinc finger protein 33A"/>
    <property type="match status" value="1"/>
</dbReference>
<dbReference type="FunFam" id="3.30.160.60:FF:001891">
    <property type="entry name" value="Zinc finger protein 527"/>
    <property type="match status" value="1"/>
</dbReference>
<dbReference type="FunFam" id="3.30.160.60:FF:000624">
    <property type="entry name" value="zinc finger protein 697"/>
    <property type="match status" value="1"/>
</dbReference>
<dbReference type="Gene3D" id="3.30.160.60">
    <property type="entry name" value="Classic Zinc Finger"/>
    <property type="match status" value="7"/>
</dbReference>
<dbReference type="InterPro" id="IPR036236">
    <property type="entry name" value="Znf_C2H2_sf"/>
</dbReference>
<dbReference type="InterPro" id="IPR013087">
    <property type="entry name" value="Znf_C2H2_type"/>
</dbReference>
<dbReference type="PANTHER" id="PTHR23226">
    <property type="entry name" value="ZINC FINGER AND SCAN DOMAIN-CONTAINING"/>
    <property type="match status" value="1"/>
</dbReference>
<dbReference type="PANTHER" id="PTHR23226:SF433">
    <property type="entry name" value="ZINC FINGER PROTEIN OZF-LIKE"/>
    <property type="match status" value="1"/>
</dbReference>
<dbReference type="Pfam" id="PF00096">
    <property type="entry name" value="zf-C2H2"/>
    <property type="match status" value="6"/>
</dbReference>
<dbReference type="SMART" id="SM00355">
    <property type="entry name" value="ZnF_C2H2"/>
    <property type="match status" value="7"/>
</dbReference>
<dbReference type="SUPFAM" id="SSF57667">
    <property type="entry name" value="beta-beta-alpha zinc fingers"/>
    <property type="match status" value="4"/>
</dbReference>
<dbReference type="PROSITE" id="PS00028">
    <property type="entry name" value="ZINC_FINGER_C2H2_1"/>
    <property type="match status" value="6"/>
</dbReference>
<dbReference type="PROSITE" id="PS50157">
    <property type="entry name" value="ZINC_FINGER_C2H2_2"/>
    <property type="match status" value="7"/>
</dbReference>
<proteinExistence type="inferred from homology"/>
<name>ZO10_XENLA</name>
<comment type="function">
    <text>May be involved in transcriptional regulation.</text>
</comment>
<comment type="subcellular location">
    <subcellularLocation>
        <location evidence="2">Nucleus</location>
    </subcellularLocation>
</comment>
<comment type="similarity">
    <text evidence="2">Belongs to the krueppel C2H2-type zinc-finger protein family.</text>
</comment>
<sequence>FSCSQCDESFVQRSELELHRQLHSGDKQFTCSECGKCFKRFSLLKEHHRIHTGENTFTCDECGKCFTQKSHMTAHQKSHLGKKPFCCSECGKHFKQNSQLVVHQRTHTGEKPFTCTESGQWFKLQSYLTEHQKSHTGEKPFSCSDCGKCFKRHSLFIEHQRIHTGEDTFSCSVCEKTFTRRSHLTAHEKCHEENNPFPFLNTLTFPGLAQIFED</sequence>